<feature type="chain" id="PRO_0000118558" description="NADH-quinone oxidoreductase subunit G">
    <location>
        <begin position="1"/>
        <end position="806"/>
    </location>
</feature>
<feature type="domain" description="2Fe-2S ferredoxin-type" evidence="3">
    <location>
        <begin position="15"/>
        <end position="93"/>
    </location>
</feature>
<feature type="domain" description="4Fe-4S His(Cys)3-ligated-type" evidence="5">
    <location>
        <begin position="95"/>
        <end position="134"/>
    </location>
</feature>
<feature type="domain" description="4Fe-4S Mo/W bis-MGD-type" evidence="4">
    <location>
        <begin position="233"/>
        <end position="289"/>
    </location>
</feature>
<feature type="binding site" evidence="1">
    <location>
        <position position="49"/>
    </location>
    <ligand>
        <name>[2Fe-2S] cluster</name>
        <dbReference type="ChEBI" id="CHEBI:190135"/>
    </ligand>
</feature>
<feature type="binding site" evidence="1">
    <location>
        <position position="60"/>
    </location>
    <ligand>
        <name>[2Fe-2S] cluster</name>
        <dbReference type="ChEBI" id="CHEBI:190135"/>
    </ligand>
</feature>
<feature type="binding site" evidence="1">
    <location>
        <position position="63"/>
    </location>
    <ligand>
        <name>[2Fe-2S] cluster</name>
        <dbReference type="ChEBI" id="CHEBI:190135"/>
    </ligand>
</feature>
<feature type="binding site" evidence="1">
    <location>
        <position position="77"/>
    </location>
    <ligand>
        <name>[2Fe-2S] cluster</name>
        <dbReference type="ChEBI" id="CHEBI:190135"/>
    </ligand>
</feature>
<feature type="binding site" evidence="5">
    <location>
        <position position="111"/>
    </location>
    <ligand>
        <name>[4Fe-4S] cluster</name>
        <dbReference type="ChEBI" id="CHEBI:49883"/>
        <label>1</label>
    </ligand>
</feature>
<feature type="binding site" evidence="5">
    <location>
        <position position="115"/>
    </location>
    <ligand>
        <name>[4Fe-4S] cluster</name>
        <dbReference type="ChEBI" id="CHEBI:49883"/>
        <label>1</label>
    </ligand>
</feature>
<feature type="binding site" evidence="5">
    <location>
        <position position="118"/>
    </location>
    <ligand>
        <name>[4Fe-4S] cluster</name>
        <dbReference type="ChEBI" id="CHEBI:49883"/>
        <label>1</label>
    </ligand>
</feature>
<feature type="binding site" evidence="5">
    <location>
        <position position="124"/>
    </location>
    <ligand>
        <name>[4Fe-4S] cluster</name>
        <dbReference type="ChEBI" id="CHEBI:49883"/>
        <label>1</label>
    </ligand>
</feature>
<feature type="binding site" evidence="1">
    <location>
        <position position="164"/>
    </location>
    <ligand>
        <name>[4Fe-4S] cluster</name>
        <dbReference type="ChEBI" id="CHEBI:49883"/>
        <label>2</label>
    </ligand>
</feature>
<feature type="binding site" evidence="1">
    <location>
        <position position="167"/>
    </location>
    <ligand>
        <name>[4Fe-4S] cluster</name>
        <dbReference type="ChEBI" id="CHEBI:49883"/>
        <label>2</label>
    </ligand>
</feature>
<feature type="binding site" evidence="1">
    <location>
        <position position="170"/>
    </location>
    <ligand>
        <name>[4Fe-4S] cluster</name>
        <dbReference type="ChEBI" id="CHEBI:49883"/>
        <label>2</label>
    </ligand>
</feature>
<feature type="binding site" evidence="1">
    <location>
        <position position="214"/>
    </location>
    <ligand>
        <name>[4Fe-4S] cluster</name>
        <dbReference type="ChEBI" id="CHEBI:49883"/>
        <label>2</label>
    </ligand>
</feature>
<feature type="binding site" evidence="2">
    <location>
        <position position="240"/>
    </location>
    <ligand>
        <name>[4Fe-4S] cluster</name>
        <dbReference type="ChEBI" id="CHEBI:49883"/>
        <label>3</label>
    </ligand>
</feature>
<feature type="binding site" evidence="2">
    <location>
        <position position="243"/>
    </location>
    <ligand>
        <name>[4Fe-4S] cluster</name>
        <dbReference type="ChEBI" id="CHEBI:49883"/>
        <label>3</label>
    </ligand>
</feature>
<feature type="binding site" evidence="2">
    <location>
        <position position="247"/>
    </location>
    <ligand>
        <name>[4Fe-4S] cluster</name>
        <dbReference type="ChEBI" id="CHEBI:49883"/>
        <label>3</label>
    </ligand>
</feature>
<feature type="binding site" evidence="2">
    <location>
        <position position="275"/>
    </location>
    <ligand>
        <name>[4Fe-4S] cluster</name>
        <dbReference type="ChEBI" id="CHEBI:49883"/>
        <label>3</label>
    </ligand>
</feature>
<evidence type="ECO:0000250" key="1"/>
<evidence type="ECO:0000255" key="2"/>
<evidence type="ECO:0000255" key="3">
    <source>
        <dbReference type="PROSITE-ProRule" id="PRU00465"/>
    </source>
</evidence>
<evidence type="ECO:0000255" key="4">
    <source>
        <dbReference type="PROSITE-ProRule" id="PRU01004"/>
    </source>
</evidence>
<evidence type="ECO:0000255" key="5">
    <source>
        <dbReference type="PROSITE-ProRule" id="PRU01184"/>
    </source>
</evidence>
<evidence type="ECO:0000305" key="6"/>
<protein>
    <recommendedName>
        <fullName>NADH-quinone oxidoreductase subunit G</fullName>
        <ecNumber>7.1.1.-</ecNumber>
    </recommendedName>
    <alternativeName>
        <fullName>NADH dehydrogenase I subunit G</fullName>
    </alternativeName>
    <alternativeName>
        <fullName>NDH-1 subunit G</fullName>
    </alternativeName>
</protein>
<sequence>MTQAADTDIRVGQPEMVTLTIDGVEISVPKGTLVIRAAELMGIQIPRFCDHPLLEPVGACRQCLVEVEGQRKPLASCTTVATDDMVVRTQLTSEIADKAQHGVMELLLINHPLDCPMCDKGGECPLQNQAMSNGRTDSRFTEAKRTFAKPINISAQVLLDRERCILCARCTRFSDQIAGDPFIDMQERGALQQVGIYADEPFESYFSGNTVQICPVGALTGTAYRFRARPFDLVSSPSVCEHCASGCAQRTDHRRGKVLRRLAGDDPEVNEEWNCDKGRWAFTYATQPDVITTPLIRDGGDPKGALVPTSWSHAMAVAAQGLAAARGRTGVLVGGRVTWEDAYAYAKFARITLGTNDIDFRARPHSAEEADFLAARIAGRHMAVSYADLESAPVVLLVGFEPEDESPIVFLRLRKAARRHRVPVYTIAPFATGGLHKMSGRLIKTVPGGEPAALDDLATGAVGDLLATPGAVIMVGERLATVPGGLSAAARLADTTGARLAWVPRRAGERGALEAGALPTLLPGGRPLADEVARAQVCAAWHIAELPAAAGRDADGILAAAADETLAALLVGGIEPADFADPDAVLAALDATGFVVSLELRHSAVTERADVVFPVAPTTQKAGAFVNWEGRYRTFEPALRGSTLQAGQSDHRVLDALADDMGVHLGVPTVEAAREELAALGIWDGKHAAGPHIAATGPTQPEAGEAILTGWRMLLDEGRLQDGEPYLAGTARTPVVRLSPDTAAEIGAADGEAVTVSTSRGSITLPCSVTDMPDRVVWLPLNSAGSTVHRQLRVTIGSIVKIGAGS</sequence>
<accession>P59962</accession>
<accession>A0A1R3Y385</accession>
<accession>X2BNJ5</accession>
<organism>
    <name type="scientific">Mycobacterium bovis (strain ATCC BAA-935 / AF2122/97)</name>
    <dbReference type="NCBI Taxonomy" id="233413"/>
    <lineage>
        <taxon>Bacteria</taxon>
        <taxon>Bacillati</taxon>
        <taxon>Actinomycetota</taxon>
        <taxon>Actinomycetes</taxon>
        <taxon>Mycobacteriales</taxon>
        <taxon>Mycobacteriaceae</taxon>
        <taxon>Mycobacterium</taxon>
        <taxon>Mycobacterium tuberculosis complex</taxon>
    </lineage>
</organism>
<dbReference type="EC" id="7.1.1.-"/>
<dbReference type="EMBL" id="LT708304">
    <property type="protein sequence ID" value="SIU01802.1"/>
    <property type="molecule type" value="Genomic_DNA"/>
</dbReference>
<dbReference type="RefSeq" id="NP_856820.1">
    <property type="nucleotide sequence ID" value="NC_002945.3"/>
</dbReference>
<dbReference type="RefSeq" id="WP_003899937.1">
    <property type="nucleotide sequence ID" value="NC_002945.4"/>
</dbReference>
<dbReference type="SMR" id="P59962"/>
<dbReference type="KEGG" id="mbo:BQ2027_MB3175"/>
<dbReference type="PATRIC" id="fig|233413.5.peg.3493"/>
<dbReference type="Proteomes" id="UP000001419">
    <property type="component" value="Chromosome"/>
</dbReference>
<dbReference type="GO" id="GO:0016020">
    <property type="term" value="C:membrane"/>
    <property type="evidence" value="ECO:0007669"/>
    <property type="project" value="InterPro"/>
</dbReference>
<dbReference type="GO" id="GO:0051537">
    <property type="term" value="F:2 iron, 2 sulfur cluster binding"/>
    <property type="evidence" value="ECO:0007669"/>
    <property type="project" value="UniProtKB-KW"/>
</dbReference>
<dbReference type="GO" id="GO:0051539">
    <property type="term" value="F:4 iron, 4 sulfur cluster binding"/>
    <property type="evidence" value="ECO:0007669"/>
    <property type="project" value="UniProtKB-KW"/>
</dbReference>
<dbReference type="GO" id="GO:0046872">
    <property type="term" value="F:metal ion binding"/>
    <property type="evidence" value="ECO:0007669"/>
    <property type="project" value="UniProtKB-KW"/>
</dbReference>
<dbReference type="GO" id="GO:0043546">
    <property type="term" value="F:molybdopterin cofactor binding"/>
    <property type="evidence" value="ECO:0007669"/>
    <property type="project" value="InterPro"/>
</dbReference>
<dbReference type="GO" id="GO:0008137">
    <property type="term" value="F:NADH dehydrogenase (ubiquinone) activity"/>
    <property type="evidence" value="ECO:0007669"/>
    <property type="project" value="InterPro"/>
</dbReference>
<dbReference type="GO" id="GO:0048038">
    <property type="term" value="F:quinone binding"/>
    <property type="evidence" value="ECO:0007669"/>
    <property type="project" value="UniProtKB-KW"/>
</dbReference>
<dbReference type="GO" id="GO:0042773">
    <property type="term" value="P:ATP synthesis coupled electron transport"/>
    <property type="evidence" value="ECO:0007669"/>
    <property type="project" value="InterPro"/>
</dbReference>
<dbReference type="CDD" id="cd00207">
    <property type="entry name" value="fer2"/>
    <property type="match status" value="1"/>
</dbReference>
<dbReference type="CDD" id="cd02788">
    <property type="entry name" value="MopB_CT_NDH-1_NuoG2-N7"/>
    <property type="match status" value="1"/>
</dbReference>
<dbReference type="CDD" id="cd02771">
    <property type="entry name" value="MopB_NDH-1_NuoG2-N7"/>
    <property type="match status" value="1"/>
</dbReference>
<dbReference type="FunFam" id="2.20.25.90:FF:000002">
    <property type="entry name" value="NADH-quinone oxidoreductase"/>
    <property type="match status" value="1"/>
</dbReference>
<dbReference type="FunFam" id="3.30.70.20:FF:000016">
    <property type="entry name" value="NADH-quinone oxidoreductase"/>
    <property type="match status" value="1"/>
</dbReference>
<dbReference type="FunFam" id="3.10.20.740:FF:000001">
    <property type="entry name" value="NADH-quinone oxidoreductase subunit G"/>
    <property type="match status" value="1"/>
</dbReference>
<dbReference type="Gene3D" id="2.40.40.20">
    <property type="match status" value="1"/>
</dbReference>
<dbReference type="Gene3D" id="3.10.20.740">
    <property type="match status" value="1"/>
</dbReference>
<dbReference type="Gene3D" id="3.30.70.20">
    <property type="match status" value="1"/>
</dbReference>
<dbReference type="Gene3D" id="3.40.50.740">
    <property type="match status" value="2"/>
</dbReference>
<dbReference type="Gene3D" id="2.20.25.90">
    <property type="entry name" value="ADC-like domains"/>
    <property type="match status" value="1"/>
</dbReference>
<dbReference type="Gene3D" id="3.40.228.10">
    <property type="entry name" value="Dimethylsulfoxide Reductase, domain 2"/>
    <property type="match status" value="1"/>
</dbReference>
<dbReference type="InterPro" id="IPR036010">
    <property type="entry name" value="2Fe-2S_ferredoxin-like_sf"/>
</dbReference>
<dbReference type="InterPro" id="IPR001041">
    <property type="entry name" value="2Fe-2S_ferredoxin-type"/>
</dbReference>
<dbReference type="InterPro" id="IPR009010">
    <property type="entry name" value="Asp_de-COase-like_dom_sf"/>
</dbReference>
<dbReference type="InterPro" id="IPR006657">
    <property type="entry name" value="MoPterin_dinucl-bd_dom"/>
</dbReference>
<dbReference type="InterPro" id="IPR006656">
    <property type="entry name" value="Mopterin_OxRdtase"/>
</dbReference>
<dbReference type="InterPro" id="IPR006963">
    <property type="entry name" value="Mopterin_OxRdtase_4Fe-4S_dom"/>
</dbReference>
<dbReference type="InterPro" id="IPR000283">
    <property type="entry name" value="NADH_UbQ_OxRdtase_75kDa_su_CS"/>
</dbReference>
<dbReference type="InterPro" id="IPR054351">
    <property type="entry name" value="NADH_UbQ_OxRdtase_ferredoxin"/>
</dbReference>
<dbReference type="InterPro" id="IPR010228">
    <property type="entry name" value="NADH_UbQ_OxRdtase_Gsu"/>
</dbReference>
<dbReference type="InterPro" id="IPR019574">
    <property type="entry name" value="NADH_UbQ_OxRdtase_Gsu_4Fe4S-bd"/>
</dbReference>
<dbReference type="InterPro" id="IPR050123">
    <property type="entry name" value="Prok_molybdopt-oxidoreductase"/>
</dbReference>
<dbReference type="NCBIfam" id="TIGR01973">
    <property type="entry name" value="NuoG"/>
    <property type="match status" value="1"/>
</dbReference>
<dbReference type="NCBIfam" id="NF005895">
    <property type="entry name" value="PRK07860.1"/>
    <property type="match status" value="1"/>
</dbReference>
<dbReference type="PANTHER" id="PTHR43105:SF12">
    <property type="entry name" value="NADH-QUINONE OXIDOREDUCTASE SUBUNIT G"/>
    <property type="match status" value="1"/>
</dbReference>
<dbReference type="PANTHER" id="PTHR43105">
    <property type="entry name" value="RESPIRATORY NITRATE REDUCTASE"/>
    <property type="match status" value="1"/>
</dbReference>
<dbReference type="Pfam" id="PF13510">
    <property type="entry name" value="Fer2_4"/>
    <property type="match status" value="1"/>
</dbReference>
<dbReference type="Pfam" id="PF22117">
    <property type="entry name" value="Fer4_Nqo3"/>
    <property type="match status" value="1"/>
</dbReference>
<dbReference type="Pfam" id="PF00384">
    <property type="entry name" value="Molybdopterin"/>
    <property type="match status" value="1"/>
</dbReference>
<dbReference type="Pfam" id="PF01568">
    <property type="entry name" value="Molydop_binding"/>
    <property type="match status" value="1"/>
</dbReference>
<dbReference type="Pfam" id="PF10588">
    <property type="entry name" value="NADH-G_4Fe-4S_3"/>
    <property type="match status" value="1"/>
</dbReference>
<dbReference type="SMART" id="SM00926">
    <property type="entry name" value="Molybdop_Fe4S4"/>
    <property type="match status" value="1"/>
</dbReference>
<dbReference type="SMART" id="SM00929">
    <property type="entry name" value="NADH-G_4Fe-4S_3"/>
    <property type="match status" value="1"/>
</dbReference>
<dbReference type="SUPFAM" id="SSF54292">
    <property type="entry name" value="2Fe-2S ferredoxin-like"/>
    <property type="match status" value="1"/>
</dbReference>
<dbReference type="SUPFAM" id="SSF54862">
    <property type="entry name" value="4Fe-4S ferredoxins"/>
    <property type="match status" value="1"/>
</dbReference>
<dbReference type="SUPFAM" id="SSF50692">
    <property type="entry name" value="ADC-like"/>
    <property type="match status" value="1"/>
</dbReference>
<dbReference type="SUPFAM" id="SSF53706">
    <property type="entry name" value="Formate dehydrogenase/DMSO reductase, domains 1-3"/>
    <property type="match status" value="1"/>
</dbReference>
<dbReference type="PROSITE" id="PS51085">
    <property type="entry name" value="2FE2S_FER_2"/>
    <property type="match status" value="1"/>
</dbReference>
<dbReference type="PROSITE" id="PS51839">
    <property type="entry name" value="4FE4S_HC3"/>
    <property type="match status" value="1"/>
</dbReference>
<dbReference type="PROSITE" id="PS51669">
    <property type="entry name" value="4FE4S_MOW_BIS_MGD"/>
    <property type="match status" value="1"/>
</dbReference>
<dbReference type="PROSITE" id="PS00641">
    <property type="entry name" value="COMPLEX1_75K_1"/>
    <property type="match status" value="1"/>
</dbReference>
<dbReference type="PROSITE" id="PS00642">
    <property type="entry name" value="COMPLEX1_75K_2"/>
    <property type="match status" value="1"/>
</dbReference>
<dbReference type="PROSITE" id="PS00643">
    <property type="entry name" value="COMPLEX1_75K_3"/>
    <property type="match status" value="1"/>
</dbReference>
<comment type="function">
    <text evidence="1">NDH-1 shuttles electrons from NADH, via FMN and iron-sulfur (Fe-S) centers, to quinones in the respiratory chain. The immediate electron acceptor for the enzyme in this species is believed to be menaquinone. Couples the redox reaction to proton translocation (for every two electrons transferred, four hydrogen ions are translocated across the cytoplasmic membrane), and thus conserves the redox energy in a proton gradient (By similarity).</text>
</comment>
<comment type="catalytic activity">
    <reaction>
        <text>a quinone + NADH + 5 H(+)(in) = a quinol + NAD(+) + 4 H(+)(out)</text>
        <dbReference type="Rhea" id="RHEA:57888"/>
        <dbReference type="ChEBI" id="CHEBI:15378"/>
        <dbReference type="ChEBI" id="CHEBI:24646"/>
        <dbReference type="ChEBI" id="CHEBI:57540"/>
        <dbReference type="ChEBI" id="CHEBI:57945"/>
        <dbReference type="ChEBI" id="CHEBI:132124"/>
    </reaction>
</comment>
<comment type="cofactor">
    <cofactor evidence="1">
        <name>[2Fe-2S] cluster</name>
        <dbReference type="ChEBI" id="CHEBI:190135"/>
    </cofactor>
    <text evidence="1">Binds 1 [2Fe-2S] cluster per subunit.</text>
</comment>
<comment type="cofactor">
    <cofactor evidence="1">
        <name>[4Fe-4S] cluster</name>
        <dbReference type="ChEBI" id="CHEBI:49883"/>
    </cofactor>
    <text evidence="1">Binds 3 [4Fe-4S] clusters per subunit.</text>
</comment>
<comment type="similarity">
    <text evidence="6">Belongs to the complex I 75 kDa subunit family.</text>
</comment>
<keyword id="KW-0001">2Fe-2S</keyword>
<keyword id="KW-0004">4Fe-4S</keyword>
<keyword id="KW-0408">Iron</keyword>
<keyword id="KW-0411">Iron-sulfur</keyword>
<keyword id="KW-0479">Metal-binding</keyword>
<keyword id="KW-0520">NAD</keyword>
<keyword id="KW-0874">Quinone</keyword>
<keyword id="KW-1185">Reference proteome</keyword>
<keyword id="KW-1278">Translocase</keyword>
<name>NUOG_MYCBO</name>
<gene>
    <name type="primary">nuoG</name>
    <name type="ordered locus">BQ2027_MB3175</name>
</gene>
<reference key="1">
    <citation type="journal article" date="2003" name="Proc. Natl. Acad. Sci. U.S.A.">
        <title>The complete genome sequence of Mycobacterium bovis.</title>
        <authorList>
            <person name="Garnier T."/>
            <person name="Eiglmeier K."/>
            <person name="Camus J.-C."/>
            <person name="Medina N."/>
            <person name="Mansoor H."/>
            <person name="Pryor M."/>
            <person name="Duthoy S."/>
            <person name="Grondin S."/>
            <person name="Lacroix C."/>
            <person name="Monsempe C."/>
            <person name="Simon S."/>
            <person name="Harris B."/>
            <person name="Atkin R."/>
            <person name="Doggett J."/>
            <person name="Mayes R."/>
            <person name="Keating L."/>
            <person name="Wheeler P.R."/>
            <person name="Parkhill J."/>
            <person name="Barrell B.G."/>
            <person name="Cole S.T."/>
            <person name="Gordon S.V."/>
            <person name="Hewinson R.G."/>
        </authorList>
    </citation>
    <scope>NUCLEOTIDE SEQUENCE [LARGE SCALE GENOMIC DNA]</scope>
    <source>
        <strain>ATCC BAA-935 / AF2122/97</strain>
    </source>
</reference>
<reference key="2">
    <citation type="journal article" date="2017" name="Genome Announc.">
        <title>Updated reference genome sequence and annotation of Mycobacterium bovis AF2122/97.</title>
        <authorList>
            <person name="Malone K.M."/>
            <person name="Farrell D."/>
            <person name="Stuber T.P."/>
            <person name="Schubert O.T."/>
            <person name="Aebersold R."/>
            <person name="Robbe-Austerman S."/>
            <person name="Gordon S.V."/>
        </authorList>
    </citation>
    <scope>NUCLEOTIDE SEQUENCE [LARGE SCALE GENOMIC DNA]</scope>
    <scope>GENOME REANNOTATION</scope>
    <source>
        <strain>ATCC BAA-935 / AF2122/97</strain>
    </source>
</reference>
<proteinExistence type="inferred from homology"/>